<name>DID_ECHCA</name>
<accession>Q5EE07</accession>
<feature type="chain" id="PRO_0000322602" description="Disintegrin">
    <location>
        <begin position="1" status="less than"/>
        <end position="64" status="greater than"/>
    </location>
</feature>
<feature type="domain" description="Disintegrin" evidence="2">
    <location>
        <begin position="1" status="less than"/>
        <end position="64" status="greater than"/>
    </location>
</feature>
<feature type="short sequence motif" description="Cell attachment site; atypical (MLD)">
    <location>
        <begin position="42"/>
        <end position="44"/>
    </location>
</feature>
<feature type="disulfide bond" evidence="2 3">
    <location>
        <begin position="6"/>
        <end position="29"/>
    </location>
</feature>
<feature type="disulfide bond" description="Interchain" evidence="2">
    <location>
        <position position="7"/>
    </location>
</feature>
<feature type="disulfide bond" description="Interchain" evidence="2">
    <location>
        <position position="12"/>
    </location>
</feature>
<feature type="disulfide bond" evidence="2 3">
    <location>
        <begin position="20"/>
        <end position="26"/>
    </location>
</feature>
<feature type="disulfide bond" evidence="2 3">
    <location>
        <begin position="25"/>
        <end position="50"/>
    </location>
</feature>
<feature type="disulfide bond" evidence="2 3">
    <location>
        <begin position="38"/>
        <end position="57"/>
    </location>
</feature>
<feature type="non-terminal residue">
    <location>
        <position position="1"/>
    </location>
</feature>
<feature type="non-terminal residue">
    <location>
        <position position="64"/>
    </location>
</feature>
<feature type="strand" evidence="5">
    <location>
        <begin position="5"/>
        <end position="8"/>
    </location>
</feature>
<feature type="turn" evidence="5">
    <location>
        <begin position="9"/>
        <end position="12"/>
    </location>
</feature>
<feature type="strand" evidence="5">
    <location>
        <begin position="21"/>
        <end position="23"/>
    </location>
</feature>
<feature type="strand" evidence="5">
    <location>
        <begin position="37"/>
        <end position="39"/>
    </location>
</feature>
<feature type="strand" evidence="5">
    <location>
        <begin position="42"/>
        <end position="45"/>
    </location>
</feature>
<protein>
    <recommendedName>
        <fullName>Disintegrin</fullName>
    </recommendedName>
</protein>
<reference key="1">
    <citation type="submission" date="2005-01" db="EMBL/GenBank/DDBJ databases">
        <title>Disintegrin from the venom glands of Echis carinatus.</title>
        <authorList>
            <person name="Baskar Singh S."/>
            <person name="Srinivasan A."/>
            <person name="Singh T.P."/>
        </authorList>
    </citation>
    <scope>NUCLEOTIDE SEQUENCE [MRNA]</scope>
    <source>
        <tissue>Venom gland</tissue>
    </source>
</reference>
<reference key="2">
    <citation type="submission" date="2005-03" db="PDB data bank">
        <title>Crystal structure of a novel disintegrin from saw-scaled viper at 3.2 A resolution.</title>
        <authorList>
            <person name="Hassan M.I."/>
            <person name="Ethayathulla A.S."/>
            <person name="Bilgrami S."/>
            <person name="Singh B."/>
            <person name="Yadav S."/>
            <person name="Singh T.P."/>
        </authorList>
    </citation>
    <scope>X-RAY CRYSTALLOGRAPHY (3.2 ANGSTROMS)</scope>
    <scope>DISULFIDE BONDS</scope>
    <source>
        <tissue>Venom</tissue>
    </source>
</reference>
<organism>
    <name type="scientific">Echis carinatus</name>
    <name type="common">Saw-scaled viper</name>
    <dbReference type="NCBI Taxonomy" id="40353"/>
    <lineage>
        <taxon>Eukaryota</taxon>
        <taxon>Metazoa</taxon>
        <taxon>Chordata</taxon>
        <taxon>Craniata</taxon>
        <taxon>Vertebrata</taxon>
        <taxon>Euteleostomi</taxon>
        <taxon>Lepidosauria</taxon>
        <taxon>Squamata</taxon>
        <taxon>Bifurcata</taxon>
        <taxon>Unidentata</taxon>
        <taxon>Episquamata</taxon>
        <taxon>Toxicofera</taxon>
        <taxon>Serpentes</taxon>
        <taxon>Colubroidea</taxon>
        <taxon>Viperidae</taxon>
        <taxon>Viperinae</taxon>
        <taxon>Echis</taxon>
    </lineage>
</organism>
<sequence length="64" mass="7127">NSVHPCCDPVKCEPREGEHCISGPCCRNCKFLNAGTICKRAMLDGLHDYCTGVTSDCPRNRYNH</sequence>
<comment type="function">
    <text evidence="1">Inhibits adhesion of cells expressing alpha-4/beta-1 (ITGA4/ITGB1) and alpha-4/beta-7 (ITGA4/ITGB7) integrins to the natural ligands vascular cell adhesion molecule 1 (VCAM-1) and mucosal addressin cell adhesion molecule 1 (MADCAM-1).</text>
</comment>
<comment type="subunit">
    <text evidence="1">Heterodimer; disulfide-linked.</text>
</comment>
<comment type="subcellular location">
    <subcellularLocation>
        <location>Secreted</location>
    </subcellularLocation>
</comment>
<comment type="tissue specificity">
    <text>Expressed by the venom gland.</text>
</comment>
<comment type="similarity">
    <text evidence="4">Belongs to the disintegrin family. Dimeric disintegrin subfamily.</text>
</comment>
<proteinExistence type="evidence at protein level"/>
<keyword id="KW-0002">3D-structure</keyword>
<keyword id="KW-1217">Cell adhesion impairing toxin</keyword>
<keyword id="KW-1015">Disulfide bond</keyword>
<keyword id="KW-0964">Secreted</keyword>
<keyword id="KW-0800">Toxin</keyword>
<evidence type="ECO:0000250" key="1"/>
<evidence type="ECO:0000255" key="2">
    <source>
        <dbReference type="PROSITE-ProRule" id="PRU00068"/>
    </source>
</evidence>
<evidence type="ECO:0000269" key="3">
    <source ref="2"/>
</evidence>
<evidence type="ECO:0000305" key="4"/>
<evidence type="ECO:0007829" key="5">
    <source>
        <dbReference type="PDB" id="1Z1X"/>
    </source>
</evidence>
<dbReference type="EMBL" id="AY902454">
    <property type="protein sequence ID" value="AAW82478.1"/>
    <property type="molecule type" value="mRNA"/>
</dbReference>
<dbReference type="PDB" id="1Z1X">
    <property type="method" value="X-ray"/>
    <property type="resolution" value="3.20 A"/>
    <property type="chains" value="A=1-64"/>
</dbReference>
<dbReference type="PDBsum" id="1Z1X"/>
<dbReference type="SMR" id="Q5EE07"/>
<dbReference type="EvolutionaryTrace" id="Q5EE07"/>
<dbReference type="GO" id="GO:0005576">
    <property type="term" value="C:extracellular region"/>
    <property type="evidence" value="ECO:0007669"/>
    <property type="project" value="UniProtKB-SubCell"/>
</dbReference>
<dbReference type="GO" id="GO:0090729">
    <property type="term" value="F:toxin activity"/>
    <property type="evidence" value="ECO:0007669"/>
    <property type="project" value="UniProtKB-KW"/>
</dbReference>
<dbReference type="Gene3D" id="4.10.70.10">
    <property type="entry name" value="Disintegrin domain"/>
    <property type="match status" value="1"/>
</dbReference>
<dbReference type="InterPro" id="IPR018358">
    <property type="entry name" value="Disintegrin_CS"/>
</dbReference>
<dbReference type="InterPro" id="IPR001762">
    <property type="entry name" value="Disintegrin_dom"/>
</dbReference>
<dbReference type="InterPro" id="IPR036436">
    <property type="entry name" value="Disintegrin_dom_sf"/>
</dbReference>
<dbReference type="PANTHER" id="PTHR11905">
    <property type="entry name" value="ADAM A DISINTEGRIN AND METALLOPROTEASE DOMAIN"/>
    <property type="match status" value="1"/>
</dbReference>
<dbReference type="PANTHER" id="PTHR11905:SF159">
    <property type="entry name" value="ADAM METALLOPROTEASE"/>
    <property type="match status" value="1"/>
</dbReference>
<dbReference type="Pfam" id="PF00200">
    <property type="entry name" value="Disintegrin"/>
    <property type="match status" value="1"/>
</dbReference>
<dbReference type="PRINTS" id="PR00289">
    <property type="entry name" value="DISINTEGRIN"/>
</dbReference>
<dbReference type="SMART" id="SM00050">
    <property type="entry name" value="DISIN"/>
    <property type="match status" value="1"/>
</dbReference>
<dbReference type="SUPFAM" id="SSF57552">
    <property type="entry name" value="Blood coagulation inhibitor (disintegrin)"/>
    <property type="match status" value="1"/>
</dbReference>
<dbReference type="PROSITE" id="PS00427">
    <property type="entry name" value="DISINTEGRIN_1"/>
    <property type="match status" value="1"/>
</dbReference>
<dbReference type="PROSITE" id="PS50214">
    <property type="entry name" value="DISINTEGRIN_2"/>
    <property type="match status" value="1"/>
</dbReference>